<protein>
    <recommendedName>
        <fullName evidence="1">Porphobilinogen deaminase</fullName>
        <shortName evidence="1">PBG</shortName>
        <ecNumber evidence="1">2.5.1.61</ecNumber>
    </recommendedName>
    <alternativeName>
        <fullName evidence="1">Hydroxymethylbilane synthase</fullName>
        <shortName evidence="1">HMBS</shortName>
    </alternativeName>
    <alternativeName>
        <fullName evidence="1">Pre-uroporphyrinogen synthase</fullName>
    </alternativeName>
</protein>
<evidence type="ECO:0000255" key="1">
    <source>
        <dbReference type="HAMAP-Rule" id="MF_00260"/>
    </source>
</evidence>
<dbReference type="EC" id="2.5.1.61" evidence="1"/>
<dbReference type="EMBL" id="CP000010">
    <property type="protein sequence ID" value="AAU49196.1"/>
    <property type="molecule type" value="Genomic_DNA"/>
</dbReference>
<dbReference type="RefSeq" id="WP_004193185.1">
    <property type="nucleotide sequence ID" value="NC_006348.1"/>
</dbReference>
<dbReference type="RefSeq" id="YP_102499.1">
    <property type="nucleotide sequence ID" value="NC_006348.1"/>
</dbReference>
<dbReference type="SMR" id="Q62LC0"/>
<dbReference type="GeneID" id="93059515"/>
<dbReference type="KEGG" id="bma:BMA0730"/>
<dbReference type="PATRIC" id="fig|243160.12.peg.748"/>
<dbReference type="eggNOG" id="COG0181">
    <property type="taxonomic scope" value="Bacteria"/>
</dbReference>
<dbReference type="HOGENOM" id="CLU_019704_0_2_4"/>
<dbReference type="UniPathway" id="UPA00251">
    <property type="reaction ID" value="UER00319"/>
</dbReference>
<dbReference type="Proteomes" id="UP000006693">
    <property type="component" value="Chromosome 1"/>
</dbReference>
<dbReference type="GO" id="GO:0005737">
    <property type="term" value="C:cytoplasm"/>
    <property type="evidence" value="ECO:0007669"/>
    <property type="project" value="TreeGrafter"/>
</dbReference>
<dbReference type="GO" id="GO:0004418">
    <property type="term" value="F:hydroxymethylbilane synthase activity"/>
    <property type="evidence" value="ECO:0007669"/>
    <property type="project" value="UniProtKB-UniRule"/>
</dbReference>
<dbReference type="GO" id="GO:0006782">
    <property type="term" value="P:protoporphyrinogen IX biosynthetic process"/>
    <property type="evidence" value="ECO:0007669"/>
    <property type="project" value="UniProtKB-UniRule"/>
</dbReference>
<dbReference type="CDD" id="cd13646">
    <property type="entry name" value="PBP2_EcHMBS_like"/>
    <property type="match status" value="1"/>
</dbReference>
<dbReference type="FunFam" id="3.40.190.10:FF:000004">
    <property type="entry name" value="Porphobilinogen deaminase"/>
    <property type="match status" value="1"/>
</dbReference>
<dbReference type="FunFam" id="3.40.190.10:FF:000005">
    <property type="entry name" value="Porphobilinogen deaminase"/>
    <property type="match status" value="1"/>
</dbReference>
<dbReference type="Gene3D" id="3.40.190.10">
    <property type="entry name" value="Periplasmic binding protein-like II"/>
    <property type="match status" value="2"/>
</dbReference>
<dbReference type="Gene3D" id="3.30.160.40">
    <property type="entry name" value="Porphobilinogen deaminase, C-terminal domain"/>
    <property type="match status" value="1"/>
</dbReference>
<dbReference type="HAMAP" id="MF_00260">
    <property type="entry name" value="Porphobil_deam"/>
    <property type="match status" value="1"/>
</dbReference>
<dbReference type="InterPro" id="IPR000860">
    <property type="entry name" value="HemC"/>
</dbReference>
<dbReference type="InterPro" id="IPR022419">
    <property type="entry name" value="Porphobilin_deaminase_cofac_BS"/>
</dbReference>
<dbReference type="InterPro" id="IPR022417">
    <property type="entry name" value="Porphobilin_deaminase_N"/>
</dbReference>
<dbReference type="InterPro" id="IPR022418">
    <property type="entry name" value="Porphobilinogen_deaminase_C"/>
</dbReference>
<dbReference type="InterPro" id="IPR036803">
    <property type="entry name" value="Porphobilinogen_deaminase_C_sf"/>
</dbReference>
<dbReference type="NCBIfam" id="TIGR00212">
    <property type="entry name" value="hemC"/>
    <property type="match status" value="1"/>
</dbReference>
<dbReference type="PANTHER" id="PTHR11557">
    <property type="entry name" value="PORPHOBILINOGEN DEAMINASE"/>
    <property type="match status" value="1"/>
</dbReference>
<dbReference type="PANTHER" id="PTHR11557:SF0">
    <property type="entry name" value="PORPHOBILINOGEN DEAMINASE"/>
    <property type="match status" value="1"/>
</dbReference>
<dbReference type="Pfam" id="PF01379">
    <property type="entry name" value="Porphobil_deam"/>
    <property type="match status" value="1"/>
</dbReference>
<dbReference type="Pfam" id="PF03900">
    <property type="entry name" value="Porphobil_deamC"/>
    <property type="match status" value="1"/>
</dbReference>
<dbReference type="PIRSF" id="PIRSF001438">
    <property type="entry name" value="4pyrrol_synth_OHMeBilane_synth"/>
    <property type="match status" value="1"/>
</dbReference>
<dbReference type="PRINTS" id="PR00151">
    <property type="entry name" value="PORPHBDMNASE"/>
</dbReference>
<dbReference type="SUPFAM" id="SSF53850">
    <property type="entry name" value="Periplasmic binding protein-like II"/>
    <property type="match status" value="1"/>
</dbReference>
<dbReference type="SUPFAM" id="SSF54782">
    <property type="entry name" value="Porphobilinogen deaminase (hydroxymethylbilane synthase), C-terminal domain"/>
    <property type="match status" value="1"/>
</dbReference>
<dbReference type="PROSITE" id="PS00533">
    <property type="entry name" value="PORPHOBILINOGEN_DEAM"/>
    <property type="match status" value="1"/>
</dbReference>
<organism>
    <name type="scientific">Burkholderia mallei (strain ATCC 23344)</name>
    <dbReference type="NCBI Taxonomy" id="243160"/>
    <lineage>
        <taxon>Bacteria</taxon>
        <taxon>Pseudomonadati</taxon>
        <taxon>Pseudomonadota</taxon>
        <taxon>Betaproteobacteria</taxon>
        <taxon>Burkholderiales</taxon>
        <taxon>Burkholderiaceae</taxon>
        <taxon>Burkholderia</taxon>
        <taxon>pseudomallei group</taxon>
    </lineage>
</organism>
<comment type="function">
    <text evidence="1">Tetrapolymerization of the monopyrrole PBG into the hydroxymethylbilane pre-uroporphyrinogen in several discrete steps.</text>
</comment>
<comment type="catalytic activity">
    <reaction evidence="1">
        <text>4 porphobilinogen + H2O = hydroxymethylbilane + 4 NH4(+)</text>
        <dbReference type="Rhea" id="RHEA:13185"/>
        <dbReference type="ChEBI" id="CHEBI:15377"/>
        <dbReference type="ChEBI" id="CHEBI:28938"/>
        <dbReference type="ChEBI" id="CHEBI:57845"/>
        <dbReference type="ChEBI" id="CHEBI:58126"/>
        <dbReference type="EC" id="2.5.1.61"/>
    </reaction>
</comment>
<comment type="cofactor">
    <cofactor evidence="1">
        <name>dipyrromethane</name>
        <dbReference type="ChEBI" id="CHEBI:60342"/>
    </cofactor>
    <text evidence="1">Binds 1 dipyrromethane group covalently.</text>
</comment>
<comment type="pathway">
    <text evidence="1">Porphyrin-containing compound metabolism; protoporphyrin-IX biosynthesis; coproporphyrinogen-III from 5-aminolevulinate: step 2/4.</text>
</comment>
<comment type="subunit">
    <text evidence="1">Monomer.</text>
</comment>
<comment type="miscellaneous">
    <text evidence="1">The porphobilinogen subunits are added to the dipyrromethane group.</text>
</comment>
<comment type="similarity">
    <text evidence="1">Belongs to the HMBS family.</text>
</comment>
<proteinExistence type="inferred from homology"/>
<name>HEM3_BURMA</name>
<reference key="1">
    <citation type="journal article" date="2004" name="Proc. Natl. Acad. Sci. U.S.A.">
        <title>Structural flexibility in the Burkholderia mallei genome.</title>
        <authorList>
            <person name="Nierman W.C."/>
            <person name="DeShazer D."/>
            <person name="Kim H.S."/>
            <person name="Tettelin H."/>
            <person name="Nelson K.E."/>
            <person name="Feldblyum T.V."/>
            <person name="Ulrich R.L."/>
            <person name="Ronning C.M."/>
            <person name="Brinkac L.M."/>
            <person name="Daugherty S.C."/>
            <person name="Davidsen T.D."/>
            <person name="DeBoy R.T."/>
            <person name="Dimitrov G."/>
            <person name="Dodson R.J."/>
            <person name="Durkin A.S."/>
            <person name="Gwinn M.L."/>
            <person name="Haft D.H."/>
            <person name="Khouri H.M."/>
            <person name="Kolonay J.F."/>
            <person name="Madupu R."/>
            <person name="Mohammoud Y."/>
            <person name="Nelson W.C."/>
            <person name="Radune D."/>
            <person name="Romero C.M."/>
            <person name="Sarria S."/>
            <person name="Selengut J."/>
            <person name="Shamblin C."/>
            <person name="Sullivan S.A."/>
            <person name="White O."/>
            <person name="Yu Y."/>
            <person name="Zafar N."/>
            <person name="Zhou L."/>
            <person name="Fraser C.M."/>
        </authorList>
    </citation>
    <scope>NUCLEOTIDE SEQUENCE [LARGE SCALE GENOMIC DNA]</scope>
    <source>
        <strain>ATCC 23344</strain>
    </source>
</reference>
<accession>Q62LC0</accession>
<keyword id="KW-0627">Porphyrin biosynthesis</keyword>
<keyword id="KW-1185">Reference proteome</keyword>
<keyword id="KW-0808">Transferase</keyword>
<feature type="chain" id="PRO_0000142917" description="Porphobilinogen deaminase">
    <location>
        <begin position="1"/>
        <end position="329"/>
    </location>
</feature>
<feature type="modified residue" description="S-(dipyrrolylmethanemethyl)cysteine" evidence="1">
    <location>
        <position position="250"/>
    </location>
</feature>
<sequence length="329" mass="34409">MNSETLPAELPATLTIASRESRLAMWQAEHVRDALRKLYPACDVKILGMTTRGDQILDRTLSKVGGKGLFVKELESALADGRADLAVHSLKDVPMALPEGFALAAVMSREDPRDAFVSNDYASLDALPAGAVVGTSSLRREAMLRARHPRLDVRPLRGNLDTRLAKLDRGDYAAIILAAAGLKRLGLAARIRALLDVDDSLPAAGQGALGIEIAARRADVAAWLAPLHDHASALAVEAERAVSRALGGSCEVPLAAHAVWRGGELHLTGSVSTTDGARVLAAHAHARAATAADALALGRRVSDALERQGARAIVDALVAASAQAQKGGA</sequence>
<gene>
    <name evidence="1" type="primary">hemC</name>
    <name type="ordered locus">BMA0730</name>
</gene>